<reference key="1">
    <citation type="journal article" date="1991" name="Eur. J. Biochem.">
        <title>Characterization of a cDNA clone encoding molluscan insulin-related peptide II of Lymnaea stagnalis.</title>
        <authorList>
            <person name="Smit A.B."/>
            <person name="Geraerts W.P.M."/>
            <person name="Meester I."/>
            <person name="van Heerikhuizen H."/>
            <person name="Joosse J."/>
        </authorList>
    </citation>
    <scope>NUCLEOTIDE SEQUENCE [MRNA]</scope>
    <source>
        <tissue>CNS</tissue>
    </source>
</reference>
<reference key="2">
    <citation type="journal article" date="1992" name="Endocrinology">
        <title>Purification and sequencing of molluscan insulin-related peptide II from the neuroendocrine light green cells in Lymnaea stagnalis.</title>
        <authorList>
            <person name="Li K.-W."/>
            <person name="Geraerts W.P.M."/>
            <person name="Joosse J."/>
        </authorList>
    </citation>
    <scope>PROTEIN SEQUENCE OF 32-66 AND 113-137</scope>
    <scope>PYROGLUTAMATE FORMATION AT GLN-32 AND GLN-113</scope>
    <source>
        <tissue>Light-green cell</tissue>
    </source>
</reference>
<accession>P25289</accession>
<feature type="signal peptide" evidence="2">
    <location>
        <begin position="1"/>
        <end position="31"/>
    </location>
</feature>
<feature type="peptide" id="PRO_0000015941" description="Molluscan insulin-related peptide 2 B chain">
    <location>
        <begin position="32"/>
        <end position="68"/>
    </location>
</feature>
<feature type="propeptide" id="PRO_0000015942" description="C-beta peptide like">
    <location>
        <begin position="71"/>
        <end position="83"/>
    </location>
</feature>
<feature type="propeptide" id="PRO_0000015943" description="C-alpha peptide like">
    <location>
        <begin position="86"/>
        <end position="110"/>
    </location>
</feature>
<feature type="peptide" id="PRO_0000015944" description="Molluscan insulin-related peptide 2 A chain">
    <location>
        <begin position="113"/>
        <end position="137"/>
    </location>
</feature>
<feature type="modified residue" description="Pyrrolidone carboxylic acid" evidence="2">
    <location>
        <position position="32"/>
    </location>
</feature>
<feature type="modified residue" description="Pyrrolidone carboxylic acid" evidence="2">
    <location>
        <position position="113"/>
    </location>
</feature>
<feature type="disulfide bond" description="Interchain (between B and A chains)" evidence="1">
    <location>
        <begin position="47"/>
        <end position="123"/>
    </location>
</feature>
<feature type="disulfide bond" description="Interchain (between B and A chains)" evidence="1">
    <location>
        <begin position="59"/>
        <end position="136"/>
    </location>
</feature>
<feature type="disulfide bond" evidence="1">
    <location>
        <begin position="122"/>
        <end position="127"/>
    </location>
</feature>
<organism>
    <name type="scientific">Lymnaea stagnalis</name>
    <name type="common">Great pond snail</name>
    <name type="synonym">Helix stagnalis</name>
    <dbReference type="NCBI Taxonomy" id="6523"/>
    <lineage>
        <taxon>Eukaryota</taxon>
        <taxon>Metazoa</taxon>
        <taxon>Spiralia</taxon>
        <taxon>Lophotrochozoa</taxon>
        <taxon>Mollusca</taxon>
        <taxon>Gastropoda</taxon>
        <taxon>Heterobranchia</taxon>
        <taxon>Euthyneura</taxon>
        <taxon>Panpulmonata</taxon>
        <taxon>Hygrophila</taxon>
        <taxon>Lymnaeoidea</taxon>
        <taxon>Lymnaeidae</taxon>
        <taxon>Lymnaea</taxon>
    </lineage>
</organism>
<protein>
    <recommendedName>
        <fullName>Molluscan insulin-related peptide 2</fullName>
    </recommendedName>
    <alternativeName>
        <fullName>MIP II</fullName>
    </alternativeName>
    <component>
        <recommendedName>
            <fullName>Molluscan insulin-related peptide 2 B chain</fullName>
        </recommendedName>
    </component>
    <component>
        <recommendedName>
            <fullName>Molluscan insulin-related peptide 2 A chain</fullName>
        </recommendedName>
    </component>
</protein>
<evidence type="ECO:0000250" key="1"/>
<evidence type="ECO:0000269" key="2">
    <source>
    </source>
</evidence>
<evidence type="ECO:0000305" key="3"/>
<keyword id="KW-0165">Cleavage on pair of basic residues</keyword>
<keyword id="KW-0968">Cytoplasmic vesicle</keyword>
<keyword id="KW-0903">Direct protein sequencing</keyword>
<keyword id="KW-1015">Disulfide bond</keyword>
<keyword id="KW-0873">Pyrrolidone carboxylic acid</keyword>
<keyword id="KW-0732">Signal</keyword>
<sequence>MVGVRLVFTNAFVVTVLLTLLLDVVVKPAEGQSSCSLSSRPHPRGICGSNLAGFRAFICSNQNSPSMVKRDAETGWLLPETMVKRNAETDLDDPLRNIKLSSESALTYLTKRQRTTNLVCECCFNYCTPDVVRKYCY</sequence>
<name>MPI2_LYMST</name>
<comment type="subunit">
    <text>Heterodimer of a B chain and an A chain linked by two disulfide bonds.</text>
</comment>
<comment type="subcellular location">
    <subcellularLocation>
        <location>Cytoplasmic vesicle</location>
        <location>Secretory vesicle</location>
    </subcellularLocation>
    <text>Secretory granules.</text>
</comment>
<comment type="tissue specificity">
    <text>Expressed in the cerebral light-green cells which are giant neuroendocrines cells involved in the control of growth.</text>
</comment>
<comment type="similarity">
    <text evidence="3">Belongs to the insulin family.</text>
</comment>
<proteinExistence type="evidence at protein level"/>
<dbReference type="EMBL" id="X59302">
    <property type="protein sequence ID" value="CAA41989.1"/>
    <property type="molecule type" value="mRNA"/>
</dbReference>
<dbReference type="PIR" id="S17195">
    <property type="entry name" value="S17195"/>
</dbReference>
<dbReference type="GO" id="GO:0005576">
    <property type="term" value="C:extracellular region"/>
    <property type="evidence" value="ECO:0007669"/>
    <property type="project" value="InterPro"/>
</dbReference>
<dbReference type="GO" id="GO:0030133">
    <property type="term" value="C:transport vesicle"/>
    <property type="evidence" value="ECO:0007669"/>
    <property type="project" value="UniProtKB-SubCell"/>
</dbReference>
<dbReference type="GO" id="GO:0005179">
    <property type="term" value="F:hormone activity"/>
    <property type="evidence" value="ECO:0007669"/>
    <property type="project" value="InterPro"/>
</dbReference>
<dbReference type="CDD" id="cd04366">
    <property type="entry name" value="IlGF_insulin_bombyxin_like"/>
    <property type="match status" value="1"/>
</dbReference>
<dbReference type="Gene3D" id="1.10.100.10">
    <property type="entry name" value="Insulin-like"/>
    <property type="match status" value="1"/>
</dbReference>
<dbReference type="InterPro" id="IPR016179">
    <property type="entry name" value="Insulin-like"/>
</dbReference>
<dbReference type="InterPro" id="IPR036438">
    <property type="entry name" value="Insulin-like_sf"/>
</dbReference>
<dbReference type="InterPro" id="IPR016724">
    <property type="entry name" value="Insulin-rel_pep"/>
</dbReference>
<dbReference type="InterPro" id="IPR022353">
    <property type="entry name" value="Insulin_CS"/>
</dbReference>
<dbReference type="Pfam" id="PF00049">
    <property type="entry name" value="Insulin"/>
    <property type="match status" value="1"/>
</dbReference>
<dbReference type="PIRSF" id="PIRSF018431">
    <property type="entry name" value="Molluscan_insulin_rel_peptide"/>
    <property type="match status" value="1"/>
</dbReference>
<dbReference type="SMART" id="SM00078">
    <property type="entry name" value="IlGF"/>
    <property type="match status" value="1"/>
</dbReference>
<dbReference type="SUPFAM" id="SSF56994">
    <property type="entry name" value="Insulin-like"/>
    <property type="match status" value="1"/>
</dbReference>
<dbReference type="PROSITE" id="PS00262">
    <property type="entry name" value="INSULIN"/>
    <property type="match status" value="1"/>
</dbReference>